<dbReference type="EC" id="3.6.5.-" evidence="1"/>
<dbReference type="EMBL" id="CT868655">
    <property type="protein sequence ID" value="CAK89528.1"/>
    <property type="molecule type" value="Genomic_DNA"/>
</dbReference>
<dbReference type="RefSeq" id="XP_001456925.1">
    <property type="nucleotide sequence ID" value="XM_001456888.1"/>
</dbReference>
<dbReference type="SMR" id="A0E2L1"/>
<dbReference type="STRING" id="5888.A0E2L1"/>
<dbReference type="EnsemblProtists" id="CAK89528">
    <property type="protein sequence ID" value="CAK89528"/>
    <property type="gene ID" value="GSPATT00022700001"/>
</dbReference>
<dbReference type="GeneID" id="5042710"/>
<dbReference type="KEGG" id="ptm:GSPATT00022700001"/>
<dbReference type="eggNOG" id="KOG2203">
    <property type="taxonomic scope" value="Eukaryota"/>
</dbReference>
<dbReference type="HOGENOM" id="CLU_378813_0_0_1"/>
<dbReference type="InParanoid" id="A0E2L1"/>
<dbReference type="OMA" id="PIIKMTE"/>
<dbReference type="OrthoDB" id="1597724at2759"/>
<dbReference type="Proteomes" id="UP000000600">
    <property type="component" value="Partially assembled WGS sequence"/>
</dbReference>
<dbReference type="GO" id="GO:0005783">
    <property type="term" value="C:endoplasmic reticulum"/>
    <property type="evidence" value="ECO:0000318"/>
    <property type="project" value="GO_Central"/>
</dbReference>
<dbReference type="GO" id="GO:0005789">
    <property type="term" value="C:endoplasmic reticulum membrane"/>
    <property type="evidence" value="ECO:0007669"/>
    <property type="project" value="UniProtKB-SubCell"/>
</dbReference>
<dbReference type="GO" id="GO:0005525">
    <property type="term" value="F:GTP binding"/>
    <property type="evidence" value="ECO:0007669"/>
    <property type="project" value="UniProtKB-UniRule"/>
</dbReference>
<dbReference type="GO" id="GO:0003924">
    <property type="term" value="F:GTPase activity"/>
    <property type="evidence" value="ECO:0000318"/>
    <property type="project" value="GO_Central"/>
</dbReference>
<dbReference type="GO" id="GO:0016320">
    <property type="term" value="P:endoplasmic reticulum membrane fusion"/>
    <property type="evidence" value="ECO:0000318"/>
    <property type="project" value="GO_Central"/>
</dbReference>
<dbReference type="Gene3D" id="3.40.50.300">
    <property type="entry name" value="P-loop containing nucleotide triphosphate hydrolases"/>
    <property type="match status" value="1"/>
</dbReference>
<dbReference type="HAMAP" id="MF_03109">
    <property type="entry name" value="Sey1"/>
    <property type="match status" value="1"/>
</dbReference>
<dbReference type="InterPro" id="IPR030386">
    <property type="entry name" value="G_GB1_RHD3_dom"/>
</dbReference>
<dbReference type="InterPro" id="IPR027417">
    <property type="entry name" value="P-loop_NTPase"/>
</dbReference>
<dbReference type="InterPro" id="IPR008803">
    <property type="entry name" value="RHD3/Sey1"/>
</dbReference>
<dbReference type="InterPro" id="IPR046758">
    <property type="entry name" value="Sey1/RHD3-like_3HB"/>
</dbReference>
<dbReference type="PANTHER" id="PTHR45923">
    <property type="entry name" value="PROTEIN SEY1"/>
    <property type="match status" value="1"/>
</dbReference>
<dbReference type="PANTHER" id="PTHR45923:SF2">
    <property type="entry name" value="PROTEIN SEY1"/>
    <property type="match status" value="1"/>
</dbReference>
<dbReference type="Pfam" id="PF05879">
    <property type="entry name" value="RHD3_GTPase"/>
    <property type="match status" value="1"/>
</dbReference>
<dbReference type="Pfam" id="PF20428">
    <property type="entry name" value="Sey1_3HB"/>
    <property type="match status" value="1"/>
</dbReference>
<dbReference type="SUPFAM" id="SSF52540">
    <property type="entry name" value="P-loop containing nucleoside triphosphate hydrolases"/>
    <property type="match status" value="1"/>
</dbReference>
<dbReference type="PROSITE" id="PS51715">
    <property type="entry name" value="G_GB1_RHD3"/>
    <property type="match status" value="1"/>
</dbReference>
<proteinExistence type="inferred from homology"/>
<gene>
    <name type="ORF">GSPATT00022700001</name>
</gene>
<accession>A0E2L1</accession>
<name>SEY12_PARTE</name>
<protein>
    <recommendedName>
        <fullName evidence="1">Protein SEY1 homolog 2</fullName>
        <ecNumber evidence="1">3.6.5.-</ecNumber>
    </recommendedName>
</protein>
<reference key="1">
    <citation type="journal article" date="2006" name="Nature">
        <title>Global trends of whole-genome duplications revealed by the ciliate Paramecium tetraurelia.</title>
        <authorList>
            <person name="Aury J.-M."/>
            <person name="Jaillon O."/>
            <person name="Duret L."/>
            <person name="Noel B."/>
            <person name="Jubin C."/>
            <person name="Porcel B.M."/>
            <person name="Segurens B."/>
            <person name="Daubin V."/>
            <person name="Anthouard V."/>
            <person name="Aiach N."/>
            <person name="Arnaiz O."/>
            <person name="Billaut A."/>
            <person name="Beisson J."/>
            <person name="Blanc I."/>
            <person name="Bouhouche K."/>
            <person name="Camara F."/>
            <person name="Duharcourt S."/>
            <person name="Guigo R."/>
            <person name="Gogendeau D."/>
            <person name="Katinka M."/>
            <person name="Keller A.-M."/>
            <person name="Kissmehl R."/>
            <person name="Klotz C."/>
            <person name="Koll F."/>
            <person name="Le Mouel A."/>
            <person name="Lepere G."/>
            <person name="Malinsky S."/>
            <person name="Nowacki M."/>
            <person name="Nowak J.K."/>
            <person name="Plattner H."/>
            <person name="Poulain J."/>
            <person name="Ruiz F."/>
            <person name="Serrano V."/>
            <person name="Zagulski M."/>
            <person name="Dessen P."/>
            <person name="Betermier M."/>
            <person name="Weissenbach J."/>
            <person name="Scarpelli C."/>
            <person name="Schaechter V."/>
            <person name="Sperling L."/>
            <person name="Meyer E."/>
            <person name="Cohen J."/>
            <person name="Wincker P."/>
        </authorList>
    </citation>
    <scope>NUCLEOTIDE SEQUENCE [LARGE SCALE GENOMIC DNA]</scope>
    <source>
        <strain>Stock d4-2</strain>
    </source>
</reference>
<organism>
    <name type="scientific">Paramecium tetraurelia</name>
    <dbReference type="NCBI Taxonomy" id="5888"/>
    <lineage>
        <taxon>Eukaryota</taxon>
        <taxon>Sar</taxon>
        <taxon>Alveolata</taxon>
        <taxon>Ciliophora</taxon>
        <taxon>Intramacronucleata</taxon>
        <taxon>Oligohymenophorea</taxon>
        <taxon>Peniculida</taxon>
        <taxon>Parameciidae</taxon>
        <taxon>Paramecium</taxon>
    </lineage>
</organism>
<keyword id="KW-0175">Coiled coil</keyword>
<keyword id="KW-0256">Endoplasmic reticulum</keyword>
<keyword id="KW-0342">GTP-binding</keyword>
<keyword id="KW-0378">Hydrolase</keyword>
<keyword id="KW-0472">Membrane</keyword>
<keyword id="KW-0547">Nucleotide-binding</keyword>
<keyword id="KW-1185">Reference proteome</keyword>
<keyword id="KW-0812">Transmembrane</keyword>
<keyword id="KW-1133">Transmembrane helix</keyword>
<evidence type="ECO:0000255" key="1">
    <source>
        <dbReference type="HAMAP-Rule" id="MF_03109"/>
    </source>
</evidence>
<evidence type="ECO:0000255" key="2">
    <source>
        <dbReference type="PROSITE-ProRule" id="PRU01052"/>
    </source>
</evidence>
<feature type="chain" id="PRO_0000384953" description="Protein SEY1 homolog 2">
    <location>
        <begin position="1"/>
        <end position="749"/>
    </location>
</feature>
<feature type="topological domain" description="Cytoplasmic" evidence="1">
    <location>
        <begin position="1"/>
        <end position="671"/>
    </location>
</feature>
<feature type="transmembrane region" description="Helical" evidence="1">
    <location>
        <begin position="672"/>
        <end position="692"/>
    </location>
</feature>
<feature type="topological domain" description="Lumenal" evidence="1">
    <location>
        <begin position="693"/>
        <end position="695"/>
    </location>
</feature>
<feature type="transmembrane region" description="Helical" evidence="1">
    <location>
        <begin position="696"/>
        <end position="716"/>
    </location>
</feature>
<feature type="topological domain" description="Cytoplasmic" evidence="1">
    <location>
        <begin position="717"/>
        <end position="749"/>
    </location>
</feature>
<feature type="domain" description="GB1/RHD3-type G" evidence="2">
    <location>
        <begin position="40"/>
        <end position="265"/>
    </location>
</feature>
<feature type="coiled-coil region" evidence="1">
    <location>
        <begin position="445"/>
        <end position="465"/>
    </location>
</feature>
<feature type="binding site" evidence="1">
    <location>
        <begin position="50"/>
        <end position="57"/>
    </location>
    <ligand>
        <name>GTP</name>
        <dbReference type="ChEBI" id="CHEBI:37565"/>
    </ligand>
</feature>
<comment type="function">
    <text evidence="1">Probable GTP-binding protein that may be involved in cell development.</text>
</comment>
<comment type="subcellular location">
    <subcellularLocation>
        <location evidence="1">Endoplasmic reticulum membrane</location>
        <topology evidence="1">Multi-pass membrane protein</topology>
    </subcellularLocation>
</comment>
<comment type="similarity">
    <text evidence="2">Belongs to the TRAFAC class dynamin-like GTPase superfamily. GB1/RHD3 GTPase family. RHD3 subfamily.</text>
</comment>
<sequence>MIKNYGDRYHLIDKKALEDKKLDKDQLVEFVRTSGISDIGKNYNIVSIIGSQSTGKSTLLNQLFGTKFDVQNRQQSVGQTTVGIWLSKDVQNNVVVLDVEGSDSVERKSGENMVENQTALMALAMSHCFIINVFLNALGQHTSCQLSIIKIIMQQNLKLFQQDTVKHIIFVVRDWDEDANYEEASRRLNGYLLNIWNEIPKPDHYKETDFHQLFSVQVVTLVYYKMKKEFIEQTNDLHAKLSNQQDPNFIFKDFDYEKNVRWSDMPQYLSNIWEVISNNKDLNLPNEKILISNMRCQQIKLEALDGVKQLNEDLQNRVRTKLVDNFAQECQTIMNLAFKLYDKDARDYHIEVYKEKEKELKDELVNRFYTYFQKQTEQLKQHYMNTLTENLETLKRESIYNLPDKLNELDLFKLQFEEQLAKSVIQKGLWQEEDHIRYFRQQFDNQLKAFVEAQLATFKQQLDNIIKSECDKIVSSQVLNISSKFWQQIESDYYAMISEKYQKYEVLLTGLRVQQKQIEDYLNKFEEDSFHNLKQVIAVASGRFKDQLFQQFKAQFVRAPDGQPRNWQKLTEEEIFHCYTDARDKVFQLLDSLRIRKIKFIRQQVVLKKKAQTLIISSSQKVQYQISSDADSDDVVLNDVFYTQVKMQLAEDIDVQYQDAIQKHKQDFLQNIPKPFWFLLLFFMYDDVLRWMGNPLFLYPILIILCFVGFCIAIGLHSLPKLAFQWVFRTLNQAVIPIIFGGISKLKGS</sequence>